<comment type="function">
    <text evidence="1">Necessary for efficient RNA polymerase transcription elongation past template-encoded arresting sites. The arresting sites in DNA have the property of trapping a certain fraction of elongating RNA polymerases that pass through, resulting in locked ternary complexes. Cleavage of the nascent transcript by cleavage factors such as GreA or GreB allows the resumption of elongation from the new 3'terminus. GreA releases sequences of 2 to 3 nucleotides.</text>
</comment>
<comment type="similarity">
    <text evidence="1">Belongs to the GreA/GreB family.</text>
</comment>
<evidence type="ECO:0000255" key="1">
    <source>
        <dbReference type="HAMAP-Rule" id="MF_00105"/>
    </source>
</evidence>
<accession>Q2A2C7</accession>
<reference key="1">
    <citation type="submission" date="2006-03" db="EMBL/GenBank/DDBJ databases">
        <title>Complete genome sequence of Francisella tularensis LVS (Live Vaccine Strain).</title>
        <authorList>
            <person name="Chain P."/>
            <person name="Larimer F."/>
            <person name="Land M."/>
            <person name="Stilwagen S."/>
            <person name="Larsson P."/>
            <person name="Bearden S."/>
            <person name="Chu M."/>
            <person name="Oyston P."/>
            <person name="Forsman M."/>
            <person name="Andersson S."/>
            <person name="Lindler L."/>
            <person name="Titball R."/>
            <person name="Garcia E."/>
        </authorList>
    </citation>
    <scope>NUCLEOTIDE SEQUENCE [LARGE SCALE GENOMIC DNA]</scope>
    <source>
        <strain>LVS</strain>
    </source>
</reference>
<sequence>MANDRVPMTPAGEQALRAELDKLKKIERPAIIEAIAEARDHGDLKENAEYHAARERQGIIEGRIKDIESKLSNAQVIDVTKIQANGMVIFGATVTIMNVDTEEETTYKIVGEDEADIDNQKISVVAPLARALIKKEEGDEITLDTPKGKVTYEIVAVEYK</sequence>
<protein>
    <recommendedName>
        <fullName evidence="1">Transcription elongation factor GreA</fullName>
    </recommendedName>
    <alternativeName>
        <fullName evidence="1">Transcript cleavage factor GreA</fullName>
    </alternativeName>
</protein>
<gene>
    <name evidence="1" type="primary">greA</name>
    <name type="ordered locus">FTL_1474</name>
</gene>
<name>GREA_FRATH</name>
<dbReference type="EMBL" id="AM233362">
    <property type="protein sequence ID" value="CAJ79913.1"/>
    <property type="molecule type" value="Genomic_DNA"/>
</dbReference>
<dbReference type="RefSeq" id="WP_003016773.1">
    <property type="nucleotide sequence ID" value="NZ_CP009694.1"/>
</dbReference>
<dbReference type="SMR" id="Q2A2C7"/>
<dbReference type="KEGG" id="ftl:FTL_1474"/>
<dbReference type="Proteomes" id="UP000001944">
    <property type="component" value="Chromosome"/>
</dbReference>
<dbReference type="GO" id="GO:0003677">
    <property type="term" value="F:DNA binding"/>
    <property type="evidence" value="ECO:0007669"/>
    <property type="project" value="UniProtKB-UniRule"/>
</dbReference>
<dbReference type="GO" id="GO:0070063">
    <property type="term" value="F:RNA polymerase binding"/>
    <property type="evidence" value="ECO:0007669"/>
    <property type="project" value="InterPro"/>
</dbReference>
<dbReference type="GO" id="GO:0006354">
    <property type="term" value="P:DNA-templated transcription elongation"/>
    <property type="evidence" value="ECO:0007669"/>
    <property type="project" value="TreeGrafter"/>
</dbReference>
<dbReference type="GO" id="GO:0032784">
    <property type="term" value="P:regulation of DNA-templated transcription elongation"/>
    <property type="evidence" value="ECO:0007669"/>
    <property type="project" value="UniProtKB-UniRule"/>
</dbReference>
<dbReference type="FunFam" id="1.10.287.180:FF:000001">
    <property type="entry name" value="Transcription elongation factor GreA"/>
    <property type="match status" value="1"/>
</dbReference>
<dbReference type="FunFam" id="3.10.50.30:FF:000001">
    <property type="entry name" value="Transcription elongation factor GreA"/>
    <property type="match status" value="1"/>
</dbReference>
<dbReference type="Gene3D" id="3.10.50.30">
    <property type="entry name" value="Transcription elongation factor, GreA/GreB, C-terminal domain"/>
    <property type="match status" value="1"/>
</dbReference>
<dbReference type="Gene3D" id="1.10.287.180">
    <property type="entry name" value="Transcription elongation factor, GreA/GreB, N-terminal domain"/>
    <property type="match status" value="1"/>
</dbReference>
<dbReference type="HAMAP" id="MF_00105">
    <property type="entry name" value="GreA_GreB"/>
    <property type="match status" value="1"/>
</dbReference>
<dbReference type="InterPro" id="IPR036953">
    <property type="entry name" value="GreA/GreB_C_sf"/>
</dbReference>
<dbReference type="InterPro" id="IPR018151">
    <property type="entry name" value="TF_GreA/GreB_CS"/>
</dbReference>
<dbReference type="InterPro" id="IPR006359">
    <property type="entry name" value="Tscrpt_elong_fac_GreA"/>
</dbReference>
<dbReference type="InterPro" id="IPR028624">
    <property type="entry name" value="Tscrpt_elong_fac_GreA/B"/>
</dbReference>
<dbReference type="InterPro" id="IPR001437">
    <property type="entry name" value="Tscrpt_elong_fac_GreA/B_C"/>
</dbReference>
<dbReference type="InterPro" id="IPR023459">
    <property type="entry name" value="Tscrpt_elong_fac_GreA/B_fam"/>
</dbReference>
<dbReference type="InterPro" id="IPR022691">
    <property type="entry name" value="Tscrpt_elong_fac_GreA/B_N"/>
</dbReference>
<dbReference type="InterPro" id="IPR036805">
    <property type="entry name" value="Tscrpt_elong_fac_GreA/B_N_sf"/>
</dbReference>
<dbReference type="NCBIfam" id="TIGR01462">
    <property type="entry name" value="greA"/>
    <property type="match status" value="1"/>
</dbReference>
<dbReference type="NCBIfam" id="NF001261">
    <property type="entry name" value="PRK00226.1-2"/>
    <property type="match status" value="1"/>
</dbReference>
<dbReference type="NCBIfam" id="NF001263">
    <property type="entry name" value="PRK00226.1-4"/>
    <property type="match status" value="1"/>
</dbReference>
<dbReference type="NCBIfam" id="NF001264">
    <property type="entry name" value="PRK00226.1-5"/>
    <property type="match status" value="1"/>
</dbReference>
<dbReference type="PANTHER" id="PTHR30437">
    <property type="entry name" value="TRANSCRIPTION ELONGATION FACTOR GREA"/>
    <property type="match status" value="1"/>
</dbReference>
<dbReference type="PANTHER" id="PTHR30437:SF4">
    <property type="entry name" value="TRANSCRIPTION ELONGATION FACTOR GREA"/>
    <property type="match status" value="1"/>
</dbReference>
<dbReference type="Pfam" id="PF01272">
    <property type="entry name" value="GreA_GreB"/>
    <property type="match status" value="1"/>
</dbReference>
<dbReference type="Pfam" id="PF03449">
    <property type="entry name" value="GreA_GreB_N"/>
    <property type="match status" value="1"/>
</dbReference>
<dbReference type="PIRSF" id="PIRSF006092">
    <property type="entry name" value="GreA_GreB"/>
    <property type="match status" value="1"/>
</dbReference>
<dbReference type="SUPFAM" id="SSF54534">
    <property type="entry name" value="FKBP-like"/>
    <property type="match status" value="1"/>
</dbReference>
<dbReference type="SUPFAM" id="SSF46557">
    <property type="entry name" value="GreA transcript cleavage protein, N-terminal domain"/>
    <property type="match status" value="1"/>
</dbReference>
<dbReference type="PROSITE" id="PS00829">
    <property type="entry name" value="GREAB_1"/>
    <property type="match status" value="1"/>
</dbReference>
<proteinExistence type="inferred from homology"/>
<feature type="chain" id="PRO_1000202854" description="Transcription elongation factor GreA">
    <location>
        <begin position="1"/>
        <end position="160"/>
    </location>
</feature>
<keyword id="KW-0238">DNA-binding</keyword>
<keyword id="KW-1185">Reference proteome</keyword>
<keyword id="KW-0804">Transcription</keyword>
<keyword id="KW-0805">Transcription regulation</keyword>
<organism>
    <name type="scientific">Francisella tularensis subsp. holarctica (strain LVS)</name>
    <dbReference type="NCBI Taxonomy" id="376619"/>
    <lineage>
        <taxon>Bacteria</taxon>
        <taxon>Pseudomonadati</taxon>
        <taxon>Pseudomonadota</taxon>
        <taxon>Gammaproteobacteria</taxon>
        <taxon>Thiotrichales</taxon>
        <taxon>Francisellaceae</taxon>
        <taxon>Francisella</taxon>
    </lineage>
</organism>